<organism>
    <name type="scientific">Rickettsia massiliae (strain Mtu5)</name>
    <dbReference type="NCBI Taxonomy" id="416276"/>
    <lineage>
        <taxon>Bacteria</taxon>
        <taxon>Pseudomonadati</taxon>
        <taxon>Pseudomonadota</taxon>
        <taxon>Alphaproteobacteria</taxon>
        <taxon>Rickettsiales</taxon>
        <taxon>Rickettsiaceae</taxon>
        <taxon>Rickettsieae</taxon>
        <taxon>Rickettsia</taxon>
        <taxon>spotted fever group</taxon>
    </lineage>
</organism>
<gene>
    <name evidence="1" type="primary">rpsR</name>
    <name type="ordered locus">RMA_0069</name>
</gene>
<protein>
    <recommendedName>
        <fullName evidence="1">Small ribosomal subunit protein bS18</fullName>
    </recommendedName>
    <alternativeName>
        <fullName evidence="2">30S ribosomal protein S18</fullName>
    </alternativeName>
</protein>
<sequence>MLKSNNASETAARKVGDKTAKKVFFRRRKGCPLSVPHAPVIDYKNPELLIKFVSEGGRMLPSRITNVCAKKQRKLNNAVKIARILALLPFVFQAK</sequence>
<reference key="1">
    <citation type="journal article" date="2007" name="Genome Res.">
        <title>Lateral gene transfer between obligate intracellular bacteria: evidence from the Rickettsia massiliae genome.</title>
        <authorList>
            <person name="Blanc G."/>
            <person name="Ogata H."/>
            <person name="Robert C."/>
            <person name="Audic S."/>
            <person name="Claverie J.-M."/>
            <person name="Raoult D."/>
        </authorList>
    </citation>
    <scope>NUCLEOTIDE SEQUENCE [LARGE SCALE GENOMIC DNA]</scope>
    <source>
        <strain>Mtu5</strain>
    </source>
</reference>
<name>RS18_RICM5</name>
<proteinExistence type="inferred from homology"/>
<feature type="chain" id="PRO_1000059142" description="Small ribosomal subunit protein bS18">
    <location>
        <begin position="1"/>
        <end position="95"/>
    </location>
</feature>
<comment type="function">
    <text evidence="1">Binds as a heterodimer with protein bS6 to the central domain of the 16S rRNA, where it helps stabilize the platform of the 30S subunit.</text>
</comment>
<comment type="subunit">
    <text evidence="1">Part of the 30S ribosomal subunit. Forms a tight heterodimer with protein bS6.</text>
</comment>
<comment type="similarity">
    <text evidence="1">Belongs to the bacterial ribosomal protein bS18 family.</text>
</comment>
<evidence type="ECO:0000255" key="1">
    <source>
        <dbReference type="HAMAP-Rule" id="MF_00270"/>
    </source>
</evidence>
<evidence type="ECO:0000305" key="2"/>
<dbReference type="EMBL" id="CP000683">
    <property type="protein sequence ID" value="ABV84382.1"/>
    <property type="molecule type" value="Genomic_DNA"/>
</dbReference>
<dbReference type="RefSeq" id="WP_012152363.1">
    <property type="nucleotide sequence ID" value="NC_009900.1"/>
</dbReference>
<dbReference type="SMR" id="A8F0E6"/>
<dbReference type="KEGG" id="rms:RMA_0069"/>
<dbReference type="HOGENOM" id="CLU_148710_2_1_5"/>
<dbReference type="Proteomes" id="UP000001311">
    <property type="component" value="Chromosome"/>
</dbReference>
<dbReference type="GO" id="GO:0022627">
    <property type="term" value="C:cytosolic small ribosomal subunit"/>
    <property type="evidence" value="ECO:0007669"/>
    <property type="project" value="TreeGrafter"/>
</dbReference>
<dbReference type="GO" id="GO:0070181">
    <property type="term" value="F:small ribosomal subunit rRNA binding"/>
    <property type="evidence" value="ECO:0007669"/>
    <property type="project" value="TreeGrafter"/>
</dbReference>
<dbReference type="GO" id="GO:0003735">
    <property type="term" value="F:structural constituent of ribosome"/>
    <property type="evidence" value="ECO:0007669"/>
    <property type="project" value="InterPro"/>
</dbReference>
<dbReference type="GO" id="GO:0006412">
    <property type="term" value="P:translation"/>
    <property type="evidence" value="ECO:0007669"/>
    <property type="project" value="UniProtKB-UniRule"/>
</dbReference>
<dbReference type="Gene3D" id="4.10.640.10">
    <property type="entry name" value="Ribosomal protein S18"/>
    <property type="match status" value="1"/>
</dbReference>
<dbReference type="HAMAP" id="MF_00270">
    <property type="entry name" value="Ribosomal_bS18"/>
    <property type="match status" value="1"/>
</dbReference>
<dbReference type="InterPro" id="IPR001648">
    <property type="entry name" value="Ribosomal_bS18"/>
</dbReference>
<dbReference type="InterPro" id="IPR018275">
    <property type="entry name" value="Ribosomal_bS18_CS"/>
</dbReference>
<dbReference type="InterPro" id="IPR036870">
    <property type="entry name" value="Ribosomal_bS18_sf"/>
</dbReference>
<dbReference type="NCBIfam" id="TIGR00165">
    <property type="entry name" value="S18"/>
    <property type="match status" value="1"/>
</dbReference>
<dbReference type="PANTHER" id="PTHR13479">
    <property type="entry name" value="30S RIBOSOMAL PROTEIN S18"/>
    <property type="match status" value="1"/>
</dbReference>
<dbReference type="PANTHER" id="PTHR13479:SF40">
    <property type="entry name" value="SMALL RIBOSOMAL SUBUNIT PROTEIN BS18M"/>
    <property type="match status" value="1"/>
</dbReference>
<dbReference type="Pfam" id="PF01084">
    <property type="entry name" value="Ribosomal_S18"/>
    <property type="match status" value="1"/>
</dbReference>
<dbReference type="PRINTS" id="PR00974">
    <property type="entry name" value="RIBOSOMALS18"/>
</dbReference>
<dbReference type="SUPFAM" id="SSF46911">
    <property type="entry name" value="Ribosomal protein S18"/>
    <property type="match status" value="1"/>
</dbReference>
<dbReference type="PROSITE" id="PS00057">
    <property type="entry name" value="RIBOSOMAL_S18"/>
    <property type="match status" value="1"/>
</dbReference>
<keyword id="KW-0687">Ribonucleoprotein</keyword>
<keyword id="KW-0689">Ribosomal protein</keyword>
<keyword id="KW-0694">RNA-binding</keyword>
<keyword id="KW-0699">rRNA-binding</keyword>
<accession>A8F0E6</accession>